<gene>
    <name evidence="1" type="primary">menG</name>
    <name type="ordered locus">Mflv_5258</name>
</gene>
<reference key="1">
    <citation type="submission" date="2007-04" db="EMBL/GenBank/DDBJ databases">
        <title>Complete sequence of chromosome of Mycobacterium gilvum PYR-GCK.</title>
        <authorList>
            <consortium name="US DOE Joint Genome Institute"/>
            <person name="Copeland A."/>
            <person name="Lucas S."/>
            <person name="Lapidus A."/>
            <person name="Barry K."/>
            <person name="Detter J.C."/>
            <person name="Glavina del Rio T."/>
            <person name="Hammon N."/>
            <person name="Israni S."/>
            <person name="Dalin E."/>
            <person name="Tice H."/>
            <person name="Pitluck S."/>
            <person name="Chain P."/>
            <person name="Malfatti S."/>
            <person name="Shin M."/>
            <person name="Vergez L."/>
            <person name="Schmutz J."/>
            <person name="Larimer F."/>
            <person name="Land M."/>
            <person name="Hauser L."/>
            <person name="Kyrpides N."/>
            <person name="Mikhailova N."/>
            <person name="Miller C."/>
            <person name="Richardson P."/>
        </authorList>
    </citation>
    <scope>NUCLEOTIDE SEQUENCE [LARGE SCALE GENOMIC DNA]</scope>
    <source>
        <strain>PYR-GCK</strain>
    </source>
</reference>
<keyword id="KW-0474">Menaquinone biosynthesis</keyword>
<keyword id="KW-0489">Methyltransferase</keyword>
<keyword id="KW-0949">S-adenosyl-L-methionine</keyword>
<keyword id="KW-0808">Transferase</keyword>
<proteinExistence type="inferred from homology"/>
<comment type="function">
    <text evidence="1">Methyltransferase required for the conversion of demethylmenaquinol (DMKH2) to menaquinol (MKH2).</text>
</comment>
<comment type="catalytic activity">
    <reaction evidence="1">
        <text>a 2-demethylmenaquinol + S-adenosyl-L-methionine = a menaquinol + S-adenosyl-L-homocysteine + H(+)</text>
        <dbReference type="Rhea" id="RHEA:42640"/>
        <dbReference type="Rhea" id="RHEA-COMP:9539"/>
        <dbReference type="Rhea" id="RHEA-COMP:9563"/>
        <dbReference type="ChEBI" id="CHEBI:15378"/>
        <dbReference type="ChEBI" id="CHEBI:18151"/>
        <dbReference type="ChEBI" id="CHEBI:55437"/>
        <dbReference type="ChEBI" id="CHEBI:57856"/>
        <dbReference type="ChEBI" id="CHEBI:59789"/>
        <dbReference type="EC" id="2.1.1.163"/>
    </reaction>
</comment>
<comment type="pathway">
    <text evidence="1">Quinol/quinone metabolism; menaquinone biosynthesis; menaquinol from 1,4-dihydroxy-2-naphthoate: step 2/2.</text>
</comment>
<comment type="similarity">
    <text evidence="1">Belongs to the class I-like SAM-binding methyltransferase superfamily. MenG/UbiE family.</text>
</comment>
<organism>
    <name type="scientific">Mycolicibacterium gilvum (strain PYR-GCK)</name>
    <name type="common">Mycobacterium gilvum (strain PYR-GCK)</name>
    <dbReference type="NCBI Taxonomy" id="350054"/>
    <lineage>
        <taxon>Bacteria</taxon>
        <taxon>Bacillati</taxon>
        <taxon>Actinomycetota</taxon>
        <taxon>Actinomycetes</taxon>
        <taxon>Mycobacteriales</taxon>
        <taxon>Mycobacteriaceae</taxon>
        <taxon>Mycolicibacterium</taxon>
    </lineage>
</organism>
<feature type="chain" id="PRO_1000088285" description="Demethylmenaquinone methyltransferase">
    <location>
        <begin position="1"/>
        <end position="228"/>
    </location>
</feature>
<feature type="binding site" evidence="1">
    <location>
        <position position="62"/>
    </location>
    <ligand>
        <name>S-adenosyl-L-methionine</name>
        <dbReference type="ChEBI" id="CHEBI:59789"/>
    </ligand>
</feature>
<feature type="binding site" evidence="1">
    <location>
        <position position="80"/>
    </location>
    <ligand>
        <name>S-adenosyl-L-methionine</name>
        <dbReference type="ChEBI" id="CHEBI:59789"/>
    </ligand>
</feature>
<feature type="binding site" evidence="1">
    <location>
        <begin position="100"/>
        <end position="101"/>
    </location>
    <ligand>
        <name>S-adenosyl-L-methionine</name>
        <dbReference type="ChEBI" id="CHEBI:59789"/>
    </ligand>
</feature>
<feature type="binding site" evidence="1">
    <location>
        <position position="117"/>
    </location>
    <ligand>
        <name>S-adenosyl-L-methionine</name>
        <dbReference type="ChEBI" id="CHEBI:59789"/>
    </ligand>
</feature>
<accession>A4T183</accession>
<evidence type="ECO:0000255" key="1">
    <source>
        <dbReference type="HAMAP-Rule" id="MF_01813"/>
    </source>
</evidence>
<sequence>MNRASLEKNPHEVASMFDGVARRYDLTNTVLSLGQDRFWRRATREALQLSPADKVLDLAAGTAVSTVELASSGAWCVAADFSVGMLAAGASRRVPKVAGDATRLPFDDGVFDAVTISFGLRNVVDFSAGLREMARVTRPGGRLVVCEFSTPTNGLFSTVYKEYLMKALPAMATAVSSNPDAYVYLAESIRAWPDQRALARRIEAAGWSDVRWRNLTGGIVALHAATKP</sequence>
<protein>
    <recommendedName>
        <fullName evidence="1">Demethylmenaquinone methyltransferase</fullName>
        <ecNumber evidence="1">2.1.1.163</ecNumber>
    </recommendedName>
</protein>
<dbReference type="EC" id="2.1.1.163" evidence="1"/>
<dbReference type="EMBL" id="CP000656">
    <property type="protein sequence ID" value="ABP47722.1"/>
    <property type="molecule type" value="Genomic_DNA"/>
</dbReference>
<dbReference type="SMR" id="A4T183"/>
<dbReference type="STRING" id="350054.Mflv_5258"/>
<dbReference type="KEGG" id="mgi:Mflv_5258"/>
<dbReference type="eggNOG" id="COG2226">
    <property type="taxonomic scope" value="Bacteria"/>
</dbReference>
<dbReference type="HOGENOM" id="CLU_037990_0_0_11"/>
<dbReference type="OrthoDB" id="9808140at2"/>
<dbReference type="UniPathway" id="UPA00079">
    <property type="reaction ID" value="UER00169"/>
</dbReference>
<dbReference type="GO" id="GO:0043770">
    <property type="term" value="F:demethylmenaquinone methyltransferase activity"/>
    <property type="evidence" value="ECO:0007669"/>
    <property type="project" value="UniProtKB-UniRule"/>
</dbReference>
<dbReference type="GO" id="GO:0009234">
    <property type="term" value="P:menaquinone biosynthetic process"/>
    <property type="evidence" value="ECO:0007669"/>
    <property type="project" value="UniProtKB-UniRule"/>
</dbReference>
<dbReference type="GO" id="GO:0032259">
    <property type="term" value="P:methylation"/>
    <property type="evidence" value="ECO:0007669"/>
    <property type="project" value="UniProtKB-KW"/>
</dbReference>
<dbReference type="CDD" id="cd02440">
    <property type="entry name" value="AdoMet_MTases"/>
    <property type="match status" value="1"/>
</dbReference>
<dbReference type="Gene3D" id="3.40.50.150">
    <property type="entry name" value="Vaccinia Virus protein VP39"/>
    <property type="match status" value="1"/>
</dbReference>
<dbReference type="HAMAP" id="MF_01813">
    <property type="entry name" value="MenG_UbiE_methyltr"/>
    <property type="match status" value="1"/>
</dbReference>
<dbReference type="InterPro" id="IPR029063">
    <property type="entry name" value="SAM-dependent_MTases_sf"/>
</dbReference>
<dbReference type="InterPro" id="IPR004033">
    <property type="entry name" value="UbiE/COQ5_MeTrFase"/>
</dbReference>
<dbReference type="InterPro" id="IPR023576">
    <property type="entry name" value="UbiE/COQ5_MeTrFase_CS"/>
</dbReference>
<dbReference type="NCBIfam" id="TIGR01934">
    <property type="entry name" value="MenG_MenH_UbiE"/>
    <property type="match status" value="1"/>
</dbReference>
<dbReference type="NCBIfam" id="NF001241">
    <property type="entry name" value="PRK00216.1-2"/>
    <property type="match status" value="1"/>
</dbReference>
<dbReference type="PANTHER" id="PTHR43591:SF24">
    <property type="entry name" value="2-METHOXY-6-POLYPRENYL-1,4-BENZOQUINOL METHYLASE, MITOCHONDRIAL"/>
    <property type="match status" value="1"/>
</dbReference>
<dbReference type="PANTHER" id="PTHR43591">
    <property type="entry name" value="METHYLTRANSFERASE"/>
    <property type="match status" value="1"/>
</dbReference>
<dbReference type="Pfam" id="PF01209">
    <property type="entry name" value="Ubie_methyltran"/>
    <property type="match status" value="1"/>
</dbReference>
<dbReference type="SUPFAM" id="SSF53335">
    <property type="entry name" value="S-adenosyl-L-methionine-dependent methyltransferases"/>
    <property type="match status" value="1"/>
</dbReference>
<dbReference type="PROSITE" id="PS51608">
    <property type="entry name" value="SAM_MT_UBIE"/>
    <property type="match status" value="1"/>
</dbReference>
<dbReference type="PROSITE" id="PS01183">
    <property type="entry name" value="UBIE_1"/>
    <property type="match status" value="1"/>
</dbReference>
<dbReference type="PROSITE" id="PS01184">
    <property type="entry name" value="UBIE_2"/>
    <property type="match status" value="1"/>
</dbReference>
<name>MENG_MYCGI</name>